<gene>
    <name evidence="1" type="primary">citD</name>
    <name type="ordered locus">M28_Spy0878</name>
</gene>
<sequence>MDIKQTAVAGSLESSDLMITVSPNDEKTITITLDSSVEKQFGNHIRQLIHQTLVNLKVTAAKVEAVDKGALDCTIQARTIAAVHRAAGVDQYDWKEIDSWNV</sequence>
<protein>
    <recommendedName>
        <fullName evidence="1">Citrate lyase acyl carrier protein</fullName>
    </recommendedName>
    <alternativeName>
        <fullName evidence="1">Citrate lyase gamma chain</fullName>
    </alternativeName>
</protein>
<feature type="chain" id="PRO_1000047085" description="Citrate lyase acyl carrier protein">
    <location>
        <begin position="1"/>
        <end position="102"/>
    </location>
</feature>
<feature type="modified residue" description="O-(phosphoribosyl dephospho-coenzyme A)serine" evidence="1">
    <location>
        <position position="14"/>
    </location>
</feature>
<name>CITD_STRPM</name>
<accession>Q48TG9</accession>
<reference key="1">
    <citation type="journal article" date="2005" name="J. Infect. Dis.">
        <title>Genome sequence of a serotype M28 strain of group A Streptococcus: potential new insights into puerperal sepsis and bacterial disease specificity.</title>
        <authorList>
            <person name="Green N.M."/>
            <person name="Zhang S."/>
            <person name="Porcella S.F."/>
            <person name="Nagiec M.J."/>
            <person name="Barbian K.D."/>
            <person name="Beres S.B."/>
            <person name="Lefebvre R.B."/>
            <person name="Musser J.M."/>
        </authorList>
    </citation>
    <scope>NUCLEOTIDE SEQUENCE [LARGE SCALE GENOMIC DNA]</scope>
    <source>
        <strain>MGAS6180</strain>
    </source>
</reference>
<evidence type="ECO:0000255" key="1">
    <source>
        <dbReference type="HAMAP-Rule" id="MF_00805"/>
    </source>
</evidence>
<proteinExistence type="inferred from homology"/>
<organism>
    <name type="scientific">Streptococcus pyogenes serotype M28 (strain MGAS6180)</name>
    <dbReference type="NCBI Taxonomy" id="319701"/>
    <lineage>
        <taxon>Bacteria</taxon>
        <taxon>Bacillati</taxon>
        <taxon>Bacillota</taxon>
        <taxon>Bacilli</taxon>
        <taxon>Lactobacillales</taxon>
        <taxon>Streptococcaceae</taxon>
        <taxon>Streptococcus</taxon>
    </lineage>
</organism>
<comment type="function">
    <text evidence="1">Covalent carrier of the coenzyme of citrate lyase.</text>
</comment>
<comment type="subunit">
    <text evidence="1">Oligomer with a subunit composition of (alpha,beta,gamma)6.</text>
</comment>
<comment type="subcellular location">
    <subcellularLocation>
        <location evidence="1">Cytoplasm</location>
    </subcellularLocation>
</comment>
<comment type="similarity">
    <text evidence="1">Belongs to the CitD family.</text>
</comment>
<dbReference type="EMBL" id="CP000056">
    <property type="protein sequence ID" value="AAX71991.1"/>
    <property type="molecule type" value="Genomic_DNA"/>
</dbReference>
<dbReference type="RefSeq" id="WP_011284806.1">
    <property type="nucleotide sequence ID" value="NC_007296.2"/>
</dbReference>
<dbReference type="SMR" id="Q48TG9"/>
<dbReference type="GeneID" id="69900839"/>
<dbReference type="KEGG" id="spb:M28_Spy0878"/>
<dbReference type="HOGENOM" id="CLU_158489_0_0_9"/>
<dbReference type="GO" id="GO:0005737">
    <property type="term" value="C:cytoplasm"/>
    <property type="evidence" value="ECO:0007669"/>
    <property type="project" value="UniProtKB-SubCell"/>
</dbReference>
<dbReference type="HAMAP" id="MF_00805">
    <property type="entry name" value="CitD"/>
    <property type="match status" value="1"/>
</dbReference>
<dbReference type="InterPro" id="IPR006495">
    <property type="entry name" value="CitD"/>
</dbReference>
<dbReference type="InterPro" id="IPR023439">
    <property type="entry name" value="Mal_deCO2ase/Cit_lyase_ACP"/>
</dbReference>
<dbReference type="NCBIfam" id="TIGR01608">
    <property type="entry name" value="citD"/>
    <property type="match status" value="1"/>
</dbReference>
<dbReference type="NCBIfam" id="NF009726">
    <property type="entry name" value="PRK13253.1"/>
    <property type="match status" value="1"/>
</dbReference>
<dbReference type="Pfam" id="PF06857">
    <property type="entry name" value="ACP"/>
    <property type="match status" value="1"/>
</dbReference>
<dbReference type="PIRSF" id="PIRSF002736">
    <property type="entry name" value="Citrt_lyas_gamma"/>
    <property type="match status" value="1"/>
</dbReference>
<keyword id="KW-0963">Cytoplasm</keyword>
<keyword id="KW-0597">Phosphoprotein</keyword>